<dbReference type="EMBL" id="BC148150">
    <property type="protein sequence ID" value="AAI48151.1"/>
    <property type="molecule type" value="mRNA"/>
</dbReference>
<dbReference type="RefSeq" id="NP_001095649.1">
    <property type="nucleotide sequence ID" value="NM_001102179.1"/>
</dbReference>
<dbReference type="SMR" id="A6QM04"/>
<dbReference type="FunCoup" id="A6QM04">
    <property type="interactions" value="3244"/>
</dbReference>
<dbReference type="STRING" id="9913.ENSBTAP00000006867"/>
<dbReference type="PaxDb" id="9913-ENSBTAP00000006867"/>
<dbReference type="GeneID" id="534811"/>
<dbReference type="KEGG" id="bta:534811"/>
<dbReference type="CTD" id="55055"/>
<dbReference type="VEuPathDB" id="HostDB:ENSBTAG00000005213"/>
<dbReference type="eggNOG" id="KOG4803">
    <property type="taxonomic scope" value="Eukaryota"/>
</dbReference>
<dbReference type="HOGENOM" id="CLU_466141_0_0_1"/>
<dbReference type="InParanoid" id="A6QM04"/>
<dbReference type="OMA" id="PARTTWF"/>
<dbReference type="OrthoDB" id="5556307at2759"/>
<dbReference type="TreeFam" id="TF324453"/>
<dbReference type="Reactome" id="R-BTA-141444">
    <property type="pathway name" value="Amplification of signal from unattached kinetochores via a MAD2 inhibitory signal"/>
</dbReference>
<dbReference type="Reactome" id="R-BTA-2467813">
    <property type="pathway name" value="Separation of Sister Chromatids"/>
</dbReference>
<dbReference type="Reactome" id="R-BTA-2500257">
    <property type="pathway name" value="Resolution of Sister Chromatid Cohesion"/>
</dbReference>
<dbReference type="Reactome" id="R-BTA-5663220">
    <property type="pathway name" value="RHO GTPases Activate Formins"/>
</dbReference>
<dbReference type="Reactome" id="R-BTA-68877">
    <property type="pathway name" value="Mitotic Prometaphase"/>
</dbReference>
<dbReference type="Reactome" id="R-BTA-9648025">
    <property type="pathway name" value="EML4 and NUDC in mitotic spindle formation"/>
</dbReference>
<dbReference type="Proteomes" id="UP000009136">
    <property type="component" value="Chromosome 10"/>
</dbReference>
<dbReference type="Bgee" id="ENSBTAG00000005213">
    <property type="expression patterns" value="Expressed in oocyte and 110 other cell types or tissues"/>
</dbReference>
<dbReference type="GO" id="GO:1990423">
    <property type="term" value="C:RZZ complex"/>
    <property type="evidence" value="ECO:0000318"/>
    <property type="project" value="GO_Central"/>
</dbReference>
<dbReference type="GO" id="GO:0051301">
    <property type="term" value="P:cell division"/>
    <property type="evidence" value="ECO:0007669"/>
    <property type="project" value="UniProtKB-KW"/>
</dbReference>
<dbReference type="GO" id="GO:0007094">
    <property type="term" value="P:mitotic spindle assembly checkpoint signaling"/>
    <property type="evidence" value="ECO:0000250"/>
    <property type="project" value="UniProtKB"/>
</dbReference>
<dbReference type="GO" id="GO:0034501">
    <property type="term" value="P:protein localization to kinetochore"/>
    <property type="evidence" value="ECO:0000318"/>
    <property type="project" value="GO_Central"/>
</dbReference>
<dbReference type="FunFam" id="1.10.287.1880:FF:000001">
    <property type="entry name" value="Protein zwilch homolog"/>
    <property type="match status" value="1"/>
</dbReference>
<dbReference type="FunFam" id="1.20.58.730:FF:000001">
    <property type="entry name" value="Protein zwilch homolog"/>
    <property type="match status" value="1"/>
</dbReference>
<dbReference type="FunFam" id="2.20.25.230:FF:000001">
    <property type="entry name" value="protein zwilch homolog isoform X1"/>
    <property type="match status" value="1"/>
</dbReference>
<dbReference type="Gene3D" id="1.10.287.1880">
    <property type="match status" value="1"/>
</dbReference>
<dbReference type="Gene3D" id="1.20.58.730">
    <property type="match status" value="1"/>
</dbReference>
<dbReference type="Gene3D" id="2.20.25.230">
    <property type="match status" value="1"/>
</dbReference>
<dbReference type="Gene3D" id="6.10.140.520">
    <property type="match status" value="1"/>
</dbReference>
<dbReference type="Gene3D" id="6.20.270.10">
    <property type="match status" value="1"/>
</dbReference>
<dbReference type="InterPro" id="IPR018630">
    <property type="entry name" value="Zwilch"/>
</dbReference>
<dbReference type="PANTHER" id="PTHR15995">
    <property type="entry name" value="PROTEIN ZWILCH HOMOLOG"/>
    <property type="match status" value="1"/>
</dbReference>
<dbReference type="PANTHER" id="PTHR15995:SF1">
    <property type="entry name" value="PROTEIN ZWILCH HOMOLOG"/>
    <property type="match status" value="1"/>
</dbReference>
<dbReference type="Pfam" id="PF09817">
    <property type="entry name" value="Zwilch"/>
    <property type="match status" value="1"/>
</dbReference>
<name>ZWILC_BOVIN</name>
<proteinExistence type="evidence at transcript level"/>
<feature type="chain" id="PRO_0000314799" description="Protein zwilch homolog">
    <location>
        <begin position="1"/>
        <end position="589"/>
    </location>
</feature>
<feature type="modified residue" description="Phosphoserine" evidence="1">
    <location>
        <position position="88"/>
    </location>
</feature>
<reference key="1">
    <citation type="submission" date="2007-06" db="EMBL/GenBank/DDBJ databases">
        <authorList>
            <consortium name="NIH - Mammalian Gene Collection (MGC) project"/>
        </authorList>
    </citation>
    <scope>NUCLEOTIDE SEQUENCE [LARGE SCALE MRNA]</scope>
    <source>
        <strain>Hereford</strain>
        <tissue>Thymus</tissue>
    </source>
</reference>
<organism>
    <name type="scientific">Bos taurus</name>
    <name type="common">Bovine</name>
    <dbReference type="NCBI Taxonomy" id="9913"/>
    <lineage>
        <taxon>Eukaryota</taxon>
        <taxon>Metazoa</taxon>
        <taxon>Chordata</taxon>
        <taxon>Craniata</taxon>
        <taxon>Vertebrata</taxon>
        <taxon>Euteleostomi</taxon>
        <taxon>Mammalia</taxon>
        <taxon>Eutheria</taxon>
        <taxon>Laurasiatheria</taxon>
        <taxon>Artiodactyla</taxon>
        <taxon>Ruminantia</taxon>
        <taxon>Pecora</taxon>
        <taxon>Bovidae</taxon>
        <taxon>Bovinae</taxon>
        <taxon>Bos</taxon>
    </lineage>
</organism>
<evidence type="ECO:0000250" key="1">
    <source>
        <dbReference type="UniProtKB" id="Q9H900"/>
    </source>
</evidence>
<evidence type="ECO:0000305" key="2"/>
<keyword id="KW-0131">Cell cycle</keyword>
<keyword id="KW-0132">Cell division</keyword>
<keyword id="KW-0137">Centromere</keyword>
<keyword id="KW-0158">Chromosome</keyword>
<keyword id="KW-0995">Kinetochore</keyword>
<keyword id="KW-0498">Mitosis</keyword>
<keyword id="KW-0597">Phosphoprotein</keyword>
<keyword id="KW-1185">Reference proteome</keyword>
<comment type="function">
    <text evidence="1">Essential component of the mitotic checkpoint, which prevents cells from prematurely exiting mitosis. Required for the assembly of the dynein-dynactin and MAD1-MAD2 complexes onto kinetochores. Its function related to the spindle assembly machinery is proposed to depend on its association in the mitotic RZZ complex (By similarity).</text>
</comment>
<comment type="subunit">
    <text evidence="1">Component of the RZZ complex composed of KNTC1/ROD, ZW10 and ZWILCH; in the complex interacts directly with KNTC1/ROD (By similarity).</text>
</comment>
<comment type="subcellular location">
    <subcellularLocation>
        <location evidence="1">Chromosome</location>
        <location evidence="1">Centromere</location>
        <location evidence="1">Kinetochore</location>
    </subcellularLocation>
</comment>
<comment type="similarity">
    <text evidence="2">Belongs to the ZWILCH family.</text>
</comment>
<gene>
    <name type="primary">ZWILCH</name>
</gene>
<sequence length="589" mass="66385">MWSGANRAAEEFYAGLLQEFDENKKGIRKDPFIYEADIQVQLISKGQPNPLKNILHENETIFIVEKVPLEKEEPSPIEELQSEDTAISDLSTGENVGLLALPIGRARQLIGFYTMAHNPNMTHLKINRPVTALPPLWVRCDGSDPEGISWLGAELISTSSNITGIVLYMVTCKVDKNYSVNLEDLKKSHKKRHHLSTLTASGFARYELFKSTALDDTVAASQTTITLDISWSPVDEILQTPPLSSTATLNIKVESGEPRGPLSQLHRELKFLLVLADGLRTGVTEWPEPLEAKSAVELVQEFLNELSKLNEFGDSTKKDTEIVKHDAAAVDGSIECLLTVRGDLDFAEQLWCKMSSSVISYQDLVKCFSLVIQSLQRGAIQPWLHSGSNSLLSKLIHQSYYGTMDTVSLSGTVPVQMLLEIGLDKLKKDYICFFIGQELASLNHLEYFISPSVDTQEQVHRVQKLHHILEIVVSCMLFIKPQHELLFSLTQSCIKYYEQNPLDEQHIFQLPVRPTAVKDLYQNEKPQKWRVEINSGQKKVKTVWQLSDSPPIDHLNFHRPDFSELTLSGSLEERISFTNMVTCSQVHFK</sequence>
<accession>A6QM04</accession>
<protein>
    <recommendedName>
        <fullName>Protein zwilch homolog</fullName>
    </recommendedName>
</protein>